<organism>
    <name type="scientific">Fusarium cortaderiae</name>
    <dbReference type="NCBI Taxonomy" id="281068"/>
    <lineage>
        <taxon>Eukaryota</taxon>
        <taxon>Fungi</taxon>
        <taxon>Dikarya</taxon>
        <taxon>Ascomycota</taxon>
        <taxon>Pezizomycotina</taxon>
        <taxon>Sordariomycetes</taxon>
        <taxon>Hypocreomycetidae</taxon>
        <taxon>Hypocreales</taxon>
        <taxon>Nectriaceae</taxon>
        <taxon>Fusarium</taxon>
    </lineage>
</organism>
<name>TRI5_FUSCO</name>
<dbReference type="EC" id="4.2.3.6"/>
<dbReference type="EMBL" id="AY102600">
    <property type="protein sequence ID" value="AAM49014.1"/>
    <property type="molecule type" value="Genomic_DNA"/>
</dbReference>
<dbReference type="EMBL" id="AY102601">
    <property type="protein sequence ID" value="AAM49022.1"/>
    <property type="molecule type" value="Genomic_DNA"/>
</dbReference>
<dbReference type="SMR" id="Q7LJF8"/>
<dbReference type="UniPathway" id="UPA00267"/>
<dbReference type="GO" id="GO:0045482">
    <property type="term" value="F:trichodiene synthase activity"/>
    <property type="evidence" value="ECO:0007669"/>
    <property type="project" value="UniProtKB-EC"/>
</dbReference>
<dbReference type="GO" id="GO:0016106">
    <property type="term" value="P:sesquiterpenoid biosynthetic process"/>
    <property type="evidence" value="ECO:0007669"/>
    <property type="project" value="InterPro"/>
</dbReference>
<dbReference type="Gene3D" id="1.10.600.10">
    <property type="entry name" value="Farnesyl Diphosphate Synthase"/>
    <property type="match status" value="1"/>
</dbReference>
<dbReference type="InterPro" id="IPR008949">
    <property type="entry name" value="Isoprenoid_synthase_dom_sf"/>
</dbReference>
<dbReference type="InterPro" id="IPR010458">
    <property type="entry name" value="TRI5_ascomyc"/>
</dbReference>
<dbReference type="InterPro" id="IPR024652">
    <property type="entry name" value="Trichodiene_synth"/>
</dbReference>
<dbReference type="Pfam" id="PF06330">
    <property type="entry name" value="TRI5"/>
    <property type="match status" value="1"/>
</dbReference>
<dbReference type="PIRSF" id="PIRSF001388">
    <property type="entry name" value="TRI5"/>
    <property type="match status" value="1"/>
</dbReference>
<dbReference type="SFLD" id="SFLDS00005">
    <property type="entry name" value="Isoprenoid_Synthase_Type_I"/>
    <property type="match status" value="1"/>
</dbReference>
<dbReference type="SFLD" id="SFLDG01021">
    <property type="entry name" value="Trichodiene_Synthase_Like"/>
    <property type="match status" value="1"/>
</dbReference>
<dbReference type="SUPFAM" id="SSF48576">
    <property type="entry name" value="Terpenoid synthases"/>
    <property type="match status" value="1"/>
</dbReference>
<reference key="1">
    <citation type="journal article" date="2002" name="Proc. Natl. Acad. Sci. U.S.A.">
        <title>Ancestral polymorphism and adaptive evolution in the trichothecene mycotoxin gene cluster of phytopathogenic Fusarium.</title>
        <authorList>
            <person name="Ward T.J."/>
            <person name="Bielawski J.P."/>
            <person name="Kistler H.C."/>
            <person name="Sullivan E."/>
            <person name="O'Donnell K."/>
        </authorList>
    </citation>
    <scope>NUCLEOTIDE SEQUENCE [GENOMIC DNA]</scope>
    <source>
        <strain>CBS 119183 / ICMP 5435 / NRRL 29297</strain>
        <strain>CBS 123655 / ICMP 8998 / NRRL 29306</strain>
    </source>
</reference>
<keyword id="KW-0456">Lyase</keyword>
<protein>
    <recommendedName>
        <fullName>Trichodiene synthase</fullName>
        <ecNumber>4.2.3.6</ecNumber>
    </recommendedName>
    <alternativeName>
        <fullName>Sesquiterpene cyclase</fullName>
        <shortName>TS</shortName>
    </alternativeName>
</protein>
<accession>Q7LJF8</accession>
<evidence type="ECO:0000305" key="1"/>
<sequence length="375" mass="43826">MENFPTEYFLNTSVRLLEYIRYRDSNYTREERIENLHYAYNKAAHHFAQPRQQKMLKVDPKRLQASLQTIVGMVVYSWAKVSKECMADLSIHYTYTLVLDDSSDDPHPAMVNYFDDLQAGREQAHPWWALVNEHFPNVLRHFGPFCSLNLIRSTMDFFEGCWIEQYNFGGFPGSDDYPQFLRRMNGLGHCVGASLWPKDLFDERKNFLEITTAVAQMENWMVWVNDLMSFYKEFDDERDQISLVKNFVTCHEITLDEALEKLTQETLHSSKQMVAVFADKDPQVMDTIECFMHGYVTWHLCDARYRLHEIYEKVKDQDTEDAKKFCKFFEQAANVGAVAASEWAYPPVAQLASVRAKSDVKEAQKPFLSSIELVE</sequence>
<feature type="chain" id="PRO_0000221578" description="Trichodiene synthase">
    <location>
        <begin position="1"/>
        <end position="375"/>
    </location>
</feature>
<proteinExistence type="inferred from homology"/>
<gene>
    <name type="primary">TRI5</name>
</gene>
<comment type="function">
    <text>TS is a member of the terpene cyclase group of enzymes. It catalyzes the isomerization and cyclization of farnesyl pyro-phosphate to form trichodiene, the first cyclic intermediate in the biosynthetic pathway for trichothecenes. It serves to branch trichothecene biosynthesis from the isoprenoid pathway.</text>
</comment>
<comment type="catalytic activity">
    <reaction>
        <text>(2E,6E)-farnesyl diphosphate = trichodiene + diphosphate</text>
        <dbReference type="Rhea" id="RHEA:12052"/>
        <dbReference type="ChEBI" id="CHEBI:15861"/>
        <dbReference type="ChEBI" id="CHEBI:33019"/>
        <dbReference type="ChEBI" id="CHEBI:175763"/>
        <dbReference type="EC" id="4.2.3.6"/>
    </reaction>
</comment>
<comment type="pathway">
    <text>Sesquiterpene biosynthesis; trichothecene biosynthesis.</text>
</comment>
<comment type="miscellaneous">
    <text>Trichothecenes are sesquiterpenoid toxins that act by inhibiting protein biosynthesis.</text>
</comment>
<comment type="similarity">
    <text evidence="1">Belongs to the trichodiene synthase family.</text>
</comment>